<evidence type="ECO:0000255" key="1">
    <source>
        <dbReference type="HAMAP-Rule" id="MF_00500"/>
    </source>
</evidence>
<evidence type="ECO:0000305" key="2"/>
<feature type="chain" id="PRO_1000014619" description="Small ribosomal subunit protein bS20">
    <location>
        <begin position="1"/>
        <end position="84"/>
    </location>
</feature>
<accession>A6LHT8</accession>
<protein>
    <recommendedName>
        <fullName evidence="1">Small ribosomal subunit protein bS20</fullName>
    </recommendedName>
    <alternativeName>
        <fullName evidence="2">30S ribosomal protein S20</fullName>
    </alternativeName>
</protein>
<comment type="function">
    <text evidence="1">Binds directly to 16S ribosomal RNA.</text>
</comment>
<comment type="similarity">
    <text evidence="1">Belongs to the bacterial ribosomal protein bS20 family.</text>
</comment>
<name>RS20_PARD8</name>
<dbReference type="EMBL" id="CP000140">
    <property type="protein sequence ID" value="ABR45252.1"/>
    <property type="molecule type" value="Genomic_DNA"/>
</dbReference>
<dbReference type="RefSeq" id="WP_005859369.1">
    <property type="nucleotide sequence ID" value="NZ_LR215978.1"/>
</dbReference>
<dbReference type="SMR" id="A6LHT8"/>
<dbReference type="STRING" id="435591.BDI_3552"/>
<dbReference type="PaxDb" id="435591-BDI_3552"/>
<dbReference type="GeneID" id="93523619"/>
<dbReference type="KEGG" id="pdi:BDI_3552"/>
<dbReference type="eggNOG" id="COG0268">
    <property type="taxonomic scope" value="Bacteria"/>
</dbReference>
<dbReference type="HOGENOM" id="CLU_160655_3_2_10"/>
<dbReference type="BioCyc" id="PDIS435591:G1G5A-3644-MONOMER"/>
<dbReference type="Proteomes" id="UP000000566">
    <property type="component" value="Chromosome"/>
</dbReference>
<dbReference type="GO" id="GO:0005829">
    <property type="term" value="C:cytosol"/>
    <property type="evidence" value="ECO:0007669"/>
    <property type="project" value="TreeGrafter"/>
</dbReference>
<dbReference type="GO" id="GO:0015935">
    <property type="term" value="C:small ribosomal subunit"/>
    <property type="evidence" value="ECO:0007669"/>
    <property type="project" value="TreeGrafter"/>
</dbReference>
<dbReference type="GO" id="GO:0070181">
    <property type="term" value="F:small ribosomal subunit rRNA binding"/>
    <property type="evidence" value="ECO:0007669"/>
    <property type="project" value="TreeGrafter"/>
</dbReference>
<dbReference type="GO" id="GO:0003735">
    <property type="term" value="F:structural constituent of ribosome"/>
    <property type="evidence" value="ECO:0007669"/>
    <property type="project" value="InterPro"/>
</dbReference>
<dbReference type="GO" id="GO:0006412">
    <property type="term" value="P:translation"/>
    <property type="evidence" value="ECO:0007669"/>
    <property type="project" value="UniProtKB-UniRule"/>
</dbReference>
<dbReference type="Gene3D" id="1.20.58.110">
    <property type="entry name" value="Ribosomal protein S20"/>
    <property type="match status" value="1"/>
</dbReference>
<dbReference type="HAMAP" id="MF_00500">
    <property type="entry name" value="Ribosomal_bS20"/>
    <property type="match status" value="1"/>
</dbReference>
<dbReference type="InterPro" id="IPR002583">
    <property type="entry name" value="Ribosomal_bS20"/>
</dbReference>
<dbReference type="InterPro" id="IPR036510">
    <property type="entry name" value="Ribosomal_bS20_sf"/>
</dbReference>
<dbReference type="NCBIfam" id="TIGR00029">
    <property type="entry name" value="S20"/>
    <property type="match status" value="1"/>
</dbReference>
<dbReference type="PANTHER" id="PTHR33398">
    <property type="entry name" value="30S RIBOSOMAL PROTEIN S20"/>
    <property type="match status" value="1"/>
</dbReference>
<dbReference type="PANTHER" id="PTHR33398:SF1">
    <property type="entry name" value="SMALL RIBOSOMAL SUBUNIT PROTEIN BS20C"/>
    <property type="match status" value="1"/>
</dbReference>
<dbReference type="Pfam" id="PF01649">
    <property type="entry name" value="Ribosomal_S20p"/>
    <property type="match status" value="1"/>
</dbReference>
<dbReference type="SUPFAM" id="SSF46992">
    <property type="entry name" value="Ribosomal protein S20"/>
    <property type="match status" value="1"/>
</dbReference>
<keyword id="KW-1185">Reference proteome</keyword>
<keyword id="KW-0687">Ribonucleoprotein</keyword>
<keyword id="KW-0689">Ribosomal protein</keyword>
<keyword id="KW-0694">RNA-binding</keyword>
<keyword id="KW-0699">rRNA-binding</keyword>
<proteinExistence type="inferred from homology"/>
<sequence>MANHKSSIKRIRQTNARRLRNRYYAKTARNAMKVLRATEDKNEAQALFPKVCSMLDKLAKKNVIHKNKAGNLKSKLAKHVNALA</sequence>
<gene>
    <name evidence="1" type="primary">rpsT</name>
    <name type="ordered locus">BDI_3552</name>
</gene>
<organism>
    <name type="scientific">Parabacteroides distasonis (strain ATCC 8503 / DSM 20701 / CIP 104284 / JCM 5825 / NCTC 11152)</name>
    <dbReference type="NCBI Taxonomy" id="435591"/>
    <lineage>
        <taxon>Bacteria</taxon>
        <taxon>Pseudomonadati</taxon>
        <taxon>Bacteroidota</taxon>
        <taxon>Bacteroidia</taxon>
        <taxon>Bacteroidales</taxon>
        <taxon>Tannerellaceae</taxon>
        <taxon>Parabacteroides</taxon>
    </lineage>
</organism>
<reference key="1">
    <citation type="journal article" date="2007" name="PLoS Biol.">
        <title>Evolution of symbiotic bacteria in the distal human intestine.</title>
        <authorList>
            <person name="Xu J."/>
            <person name="Mahowald M.A."/>
            <person name="Ley R.E."/>
            <person name="Lozupone C.A."/>
            <person name="Hamady M."/>
            <person name="Martens E.C."/>
            <person name="Henrissat B."/>
            <person name="Coutinho P.M."/>
            <person name="Minx P."/>
            <person name="Latreille P."/>
            <person name="Cordum H."/>
            <person name="Van Brunt A."/>
            <person name="Kim K."/>
            <person name="Fulton R.S."/>
            <person name="Fulton L.A."/>
            <person name="Clifton S.W."/>
            <person name="Wilson R.K."/>
            <person name="Knight R.D."/>
            <person name="Gordon J.I."/>
        </authorList>
    </citation>
    <scope>NUCLEOTIDE SEQUENCE [LARGE SCALE GENOMIC DNA]</scope>
    <source>
        <strain>ATCC 8503 / DSM 20701 / CIP 104284 / JCM 5825 / NCTC 11152</strain>
    </source>
</reference>